<proteinExistence type="inferred from homology"/>
<reference key="1">
    <citation type="journal article" date="2011" name="Proc. Natl. Acad. Sci. U.S.A.">
        <title>Genomic anatomy of Escherichia coli O157:H7 outbreaks.</title>
        <authorList>
            <person name="Eppinger M."/>
            <person name="Mammel M.K."/>
            <person name="Leclerc J.E."/>
            <person name="Ravel J."/>
            <person name="Cebula T.A."/>
        </authorList>
    </citation>
    <scope>NUCLEOTIDE SEQUENCE [LARGE SCALE GENOMIC DNA]</scope>
    <source>
        <strain>EC4115 / EHEC</strain>
    </source>
</reference>
<comment type="function">
    <text evidence="1">This regulatory protein, when combined with SAM (S-adenosylmethionine) represses the expression of the methionine regulon and of enzymes involved in SAM synthesis.</text>
</comment>
<comment type="subunit">
    <text evidence="1">Homodimer.</text>
</comment>
<comment type="subcellular location">
    <subcellularLocation>
        <location evidence="1">Cytoplasm</location>
    </subcellularLocation>
</comment>
<comment type="domain">
    <text>Does not bind DNA by a helix-turn-helix motif.</text>
</comment>
<comment type="similarity">
    <text evidence="1">Belongs to the MetJ family.</text>
</comment>
<gene>
    <name evidence="1" type="primary">metJ</name>
    <name type="ordered locus">ECH74115_5398</name>
</gene>
<sequence length="105" mass="12141">MAEWSGEYISPYAEHGKKSEQVKKITVSIPLKVLKILTDERTRRQVNNLRHATNSELLCEAFLHAFTGQPLPDDADLRKERSDEIPEAAKEIMREMGINPETWEY</sequence>
<dbReference type="EMBL" id="CP001164">
    <property type="protein sequence ID" value="ACI36859.1"/>
    <property type="molecule type" value="Genomic_DNA"/>
</dbReference>
<dbReference type="RefSeq" id="WP_000852812.1">
    <property type="nucleotide sequence ID" value="NC_011353.1"/>
</dbReference>
<dbReference type="SMR" id="B5Z040"/>
<dbReference type="GeneID" id="93777954"/>
<dbReference type="KEGG" id="ecf:ECH74115_5398"/>
<dbReference type="HOGENOM" id="CLU_142318_0_0_6"/>
<dbReference type="GO" id="GO:0005737">
    <property type="term" value="C:cytoplasm"/>
    <property type="evidence" value="ECO:0007669"/>
    <property type="project" value="UniProtKB-SubCell"/>
</dbReference>
<dbReference type="GO" id="GO:0003677">
    <property type="term" value="F:DNA binding"/>
    <property type="evidence" value="ECO:0007669"/>
    <property type="project" value="UniProtKB-KW"/>
</dbReference>
<dbReference type="GO" id="GO:0003700">
    <property type="term" value="F:DNA-binding transcription factor activity"/>
    <property type="evidence" value="ECO:0007669"/>
    <property type="project" value="InterPro"/>
</dbReference>
<dbReference type="GO" id="GO:0009086">
    <property type="term" value="P:methionine biosynthetic process"/>
    <property type="evidence" value="ECO:0007669"/>
    <property type="project" value="UniProtKB-UniRule"/>
</dbReference>
<dbReference type="GO" id="GO:0045892">
    <property type="term" value="P:negative regulation of DNA-templated transcription"/>
    <property type="evidence" value="ECO:0007669"/>
    <property type="project" value="UniProtKB-UniRule"/>
</dbReference>
<dbReference type="CDD" id="cd00490">
    <property type="entry name" value="Met_repressor_MetJ"/>
    <property type="match status" value="1"/>
</dbReference>
<dbReference type="FunFam" id="1.10.140.10:FF:000001">
    <property type="entry name" value="Met repressor"/>
    <property type="match status" value="1"/>
</dbReference>
<dbReference type="Gene3D" id="1.10.140.10">
    <property type="entry name" value="MET Apo-Repressor, subunit A"/>
    <property type="match status" value="1"/>
</dbReference>
<dbReference type="HAMAP" id="MF_00744">
    <property type="entry name" value="MetJ"/>
    <property type="match status" value="1"/>
</dbReference>
<dbReference type="InterPro" id="IPR002084">
    <property type="entry name" value="Met_repressor_MetJ"/>
</dbReference>
<dbReference type="InterPro" id="IPR023453">
    <property type="entry name" value="Met_repressor_MetJ_dom_sf"/>
</dbReference>
<dbReference type="InterPro" id="IPR010985">
    <property type="entry name" value="Ribbon_hlx_hlx"/>
</dbReference>
<dbReference type="NCBIfam" id="NF003622">
    <property type="entry name" value="PRK05264.1"/>
    <property type="match status" value="1"/>
</dbReference>
<dbReference type="Pfam" id="PF01340">
    <property type="entry name" value="MetJ"/>
    <property type="match status" value="1"/>
</dbReference>
<dbReference type="SUPFAM" id="SSF47598">
    <property type="entry name" value="Ribbon-helix-helix"/>
    <property type="match status" value="1"/>
</dbReference>
<feature type="chain" id="PRO_1000191212" description="Met repressor">
    <location>
        <begin position="1"/>
        <end position="105"/>
    </location>
</feature>
<evidence type="ECO:0000255" key="1">
    <source>
        <dbReference type="HAMAP-Rule" id="MF_00744"/>
    </source>
</evidence>
<keyword id="KW-0028">Amino-acid biosynthesis</keyword>
<keyword id="KW-0963">Cytoplasm</keyword>
<keyword id="KW-0238">DNA-binding</keyword>
<keyword id="KW-0486">Methionine biosynthesis</keyword>
<keyword id="KW-0678">Repressor</keyword>
<keyword id="KW-0804">Transcription</keyword>
<keyword id="KW-0805">Transcription regulation</keyword>
<name>METJ_ECO5E</name>
<accession>B5Z040</accession>
<protein>
    <recommendedName>
        <fullName evidence="1">Met repressor</fullName>
    </recommendedName>
    <alternativeName>
        <fullName evidence="1">Met regulon regulatory protein MetJ</fullName>
    </alternativeName>
</protein>
<organism>
    <name type="scientific">Escherichia coli O157:H7 (strain EC4115 / EHEC)</name>
    <dbReference type="NCBI Taxonomy" id="444450"/>
    <lineage>
        <taxon>Bacteria</taxon>
        <taxon>Pseudomonadati</taxon>
        <taxon>Pseudomonadota</taxon>
        <taxon>Gammaproteobacteria</taxon>
        <taxon>Enterobacterales</taxon>
        <taxon>Enterobacteriaceae</taxon>
        <taxon>Escherichia</taxon>
    </lineage>
</organism>